<keyword id="KW-0067">ATP-binding</keyword>
<keyword id="KW-0963">Cytoplasm</keyword>
<keyword id="KW-0547">Nucleotide-binding</keyword>
<keyword id="KW-0694">RNA-binding</keyword>
<keyword id="KW-0784">Thiamine biosynthesis</keyword>
<keyword id="KW-0808">Transferase</keyword>
<keyword id="KW-0820">tRNA-binding</keyword>
<feature type="chain" id="PRO_0000411587" description="Probable tRNA sulfurtransferase">
    <location>
        <begin position="1"/>
        <end position="404"/>
    </location>
</feature>
<feature type="domain" description="THUMP" evidence="1">
    <location>
        <begin position="60"/>
        <end position="165"/>
    </location>
</feature>
<feature type="binding site" evidence="1">
    <location>
        <begin position="183"/>
        <end position="184"/>
    </location>
    <ligand>
        <name>ATP</name>
        <dbReference type="ChEBI" id="CHEBI:30616"/>
    </ligand>
</feature>
<feature type="binding site" evidence="1">
    <location>
        <begin position="208"/>
        <end position="209"/>
    </location>
    <ligand>
        <name>ATP</name>
        <dbReference type="ChEBI" id="CHEBI:30616"/>
    </ligand>
</feature>
<feature type="binding site" evidence="1">
    <location>
        <position position="265"/>
    </location>
    <ligand>
        <name>ATP</name>
        <dbReference type="ChEBI" id="CHEBI:30616"/>
    </ligand>
</feature>
<feature type="binding site" evidence="1">
    <location>
        <position position="287"/>
    </location>
    <ligand>
        <name>ATP</name>
        <dbReference type="ChEBI" id="CHEBI:30616"/>
    </ligand>
</feature>
<feature type="binding site" evidence="1">
    <location>
        <position position="296"/>
    </location>
    <ligand>
        <name>ATP</name>
        <dbReference type="ChEBI" id="CHEBI:30616"/>
    </ligand>
</feature>
<organism>
    <name type="scientific">Streptococcus pyogenes serotype M3 (strain SSI-1)</name>
    <dbReference type="NCBI Taxonomy" id="193567"/>
    <lineage>
        <taxon>Bacteria</taxon>
        <taxon>Bacillati</taxon>
        <taxon>Bacillota</taxon>
        <taxon>Bacilli</taxon>
        <taxon>Lactobacillales</taxon>
        <taxon>Streptococcaceae</taxon>
        <taxon>Streptococcus</taxon>
    </lineage>
</organism>
<reference key="1">
    <citation type="journal article" date="2003" name="Genome Res.">
        <title>Genome sequence of an M3 strain of Streptococcus pyogenes reveals a large-scale genomic rearrangement in invasive strains and new insights into phage evolution.</title>
        <authorList>
            <person name="Nakagawa I."/>
            <person name="Kurokawa K."/>
            <person name="Yamashita A."/>
            <person name="Nakata M."/>
            <person name="Tomiyasu Y."/>
            <person name="Okahashi N."/>
            <person name="Kawabata S."/>
            <person name="Yamazaki K."/>
            <person name="Shiba T."/>
            <person name="Yasunaga T."/>
            <person name="Hayashi H."/>
            <person name="Hattori M."/>
            <person name="Hamada S."/>
        </authorList>
    </citation>
    <scope>NUCLEOTIDE SEQUENCE [LARGE SCALE GENOMIC DNA]</scope>
    <source>
        <strain>SSI-1</strain>
    </source>
</reference>
<sequence>MDYSEIMVRHGELSTKGKNRMRFINKLKNNIQDVLAPFPAITVRSDRDRTHVSLNGTDYQPIVEALKLVFGVQALSPVYKLEKSVPLLVTAVQDIMTSLYRDGLTFKIATKRSDHAFELDSRELNSLLGGAVFEVLPNIQAQMKHPDVTLKVEIRDEAAYISYEEIKGAGGLPVGTSGKGMLMLSGGIDSPVAGYLALKRGLDIEVVHFASPPYTSPGALAKAQDLTRRLTRFGGNIQFIEVPFTEIQEEIKNKAPEAYLMTLTRRFMMRITDAIREQRKGLVIVNGESLGQVASQTLESMQAINAVTSTPIIRPVVTMDKLEIIEMAQAIDTFDISIQPFEDCCTIFAPDRPKTNPKLGNAEKYEERFDIDGLVQRAVSGIVVTEITPEIVNDEVENLIDALL</sequence>
<comment type="function">
    <text evidence="1">Catalyzes the ATP-dependent transfer of a sulfur to tRNA to produce 4-thiouridine in position 8 of tRNAs, which functions as a near-UV photosensor. Also catalyzes the transfer of sulfur to the sulfur carrier protein ThiS, forming ThiS-thiocarboxylate. This is a step in the synthesis of thiazole, in the thiamine biosynthesis pathway. The sulfur is donated as persulfide by IscS.</text>
</comment>
<comment type="catalytic activity">
    <reaction evidence="1">
        <text>[ThiI sulfur-carrier protein]-S-sulfanyl-L-cysteine + a uridine in tRNA + 2 reduced [2Fe-2S]-[ferredoxin] + ATP + H(+) = [ThiI sulfur-carrier protein]-L-cysteine + a 4-thiouridine in tRNA + 2 oxidized [2Fe-2S]-[ferredoxin] + AMP + diphosphate</text>
        <dbReference type="Rhea" id="RHEA:24176"/>
        <dbReference type="Rhea" id="RHEA-COMP:10000"/>
        <dbReference type="Rhea" id="RHEA-COMP:10001"/>
        <dbReference type="Rhea" id="RHEA-COMP:13337"/>
        <dbReference type="Rhea" id="RHEA-COMP:13338"/>
        <dbReference type="Rhea" id="RHEA-COMP:13339"/>
        <dbReference type="Rhea" id="RHEA-COMP:13340"/>
        <dbReference type="ChEBI" id="CHEBI:15378"/>
        <dbReference type="ChEBI" id="CHEBI:29950"/>
        <dbReference type="ChEBI" id="CHEBI:30616"/>
        <dbReference type="ChEBI" id="CHEBI:33019"/>
        <dbReference type="ChEBI" id="CHEBI:33737"/>
        <dbReference type="ChEBI" id="CHEBI:33738"/>
        <dbReference type="ChEBI" id="CHEBI:61963"/>
        <dbReference type="ChEBI" id="CHEBI:65315"/>
        <dbReference type="ChEBI" id="CHEBI:136798"/>
        <dbReference type="ChEBI" id="CHEBI:456215"/>
        <dbReference type="EC" id="2.8.1.4"/>
    </reaction>
</comment>
<comment type="catalytic activity">
    <reaction evidence="1">
        <text>[ThiS sulfur-carrier protein]-C-terminal Gly-Gly-AMP + S-sulfanyl-L-cysteinyl-[cysteine desulfurase] + AH2 = [ThiS sulfur-carrier protein]-C-terminal-Gly-aminoethanethioate + L-cysteinyl-[cysteine desulfurase] + A + AMP + 2 H(+)</text>
        <dbReference type="Rhea" id="RHEA:43340"/>
        <dbReference type="Rhea" id="RHEA-COMP:12157"/>
        <dbReference type="Rhea" id="RHEA-COMP:12158"/>
        <dbReference type="Rhea" id="RHEA-COMP:12910"/>
        <dbReference type="Rhea" id="RHEA-COMP:19908"/>
        <dbReference type="ChEBI" id="CHEBI:13193"/>
        <dbReference type="ChEBI" id="CHEBI:15378"/>
        <dbReference type="ChEBI" id="CHEBI:17499"/>
        <dbReference type="ChEBI" id="CHEBI:29950"/>
        <dbReference type="ChEBI" id="CHEBI:61963"/>
        <dbReference type="ChEBI" id="CHEBI:90618"/>
        <dbReference type="ChEBI" id="CHEBI:232372"/>
        <dbReference type="ChEBI" id="CHEBI:456215"/>
    </reaction>
</comment>
<comment type="pathway">
    <text evidence="1">Cofactor biosynthesis; thiamine diphosphate biosynthesis.</text>
</comment>
<comment type="subcellular location">
    <subcellularLocation>
        <location evidence="1">Cytoplasm</location>
    </subcellularLocation>
</comment>
<comment type="similarity">
    <text evidence="1">Belongs to the ThiI family.</text>
</comment>
<evidence type="ECO:0000255" key="1">
    <source>
        <dbReference type="HAMAP-Rule" id="MF_00021"/>
    </source>
</evidence>
<proteinExistence type="inferred from homology"/>
<name>THII_STRPQ</name>
<gene>
    <name evidence="1" type="primary">thiI</name>
    <name type="ordered locus">SPs1304</name>
</gene>
<dbReference type="EC" id="2.8.1.4" evidence="1"/>
<dbReference type="EMBL" id="BA000034">
    <property type="protein sequence ID" value="BAC64399.1"/>
    <property type="molecule type" value="Genomic_DNA"/>
</dbReference>
<dbReference type="RefSeq" id="WP_011106827.1">
    <property type="nucleotide sequence ID" value="NC_004606.1"/>
</dbReference>
<dbReference type="SMR" id="P0DF95"/>
<dbReference type="KEGG" id="sps:SPs1304"/>
<dbReference type="HOGENOM" id="CLU_037952_4_0_9"/>
<dbReference type="UniPathway" id="UPA00060"/>
<dbReference type="GO" id="GO:0005829">
    <property type="term" value="C:cytosol"/>
    <property type="evidence" value="ECO:0007669"/>
    <property type="project" value="TreeGrafter"/>
</dbReference>
<dbReference type="GO" id="GO:0005524">
    <property type="term" value="F:ATP binding"/>
    <property type="evidence" value="ECO:0007669"/>
    <property type="project" value="UniProtKB-UniRule"/>
</dbReference>
<dbReference type="GO" id="GO:0004810">
    <property type="term" value="F:CCA tRNA nucleotidyltransferase activity"/>
    <property type="evidence" value="ECO:0007669"/>
    <property type="project" value="InterPro"/>
</dbReference>
<dbReference type="GO" id="GO:0000049">
    <property type="term" value="F:tRNA binding"/>
    <property type="evidence" value="ECO:0007669"/>
    <property type="project" value="UniProtKB-UniRule"/>
</dbReference>
<dbReference type="GO" id="GO:0140741">
    <property type="term" value="F:tRNA-uracil-4 sulfurtransferase activity"/>
    <property type="evidence" value="ECO:0007669"/>
    <property type="project" value="UniProtKB-EC"/>
</dbReference>
<dbReference type="GO" id="GO:0009228">
    <property type="term" value="P:thiamine biosynthetic process"/>
    <property type="evidence" value="ECO:0007669"/>
    <property type="project" value="UniProtKB-KW"/>
</dbReference>
<dbReference type="GO" id="GO:0009229">
    <property type="term" value="P:thiamine diphosphate biosynthetic process"/>
    <property type="evidence" value="ECO:0007669"/>
    <property type="project" value="UniProtKB-UniRule"/>
</dbReference>
<dbReference type="GO" id="GO:0052837">
    <property type="term" value="P:thiazole biosynthetic process"/>
    <property type="evidence" value="ECO:0007669"/>
    <property type="project" value="TreeGrafter"/>
</dbReference>
<dbReference type="GO" id="GO:0002937">
    <property type="term" value="P:tRNA 4-thiouridine biosynthesis"/>
    <property type="evidence" value="ECO:0007669"/>
    <property type="project" value="TreeGrafter"/>
</dbReference>
<dbReference type="CDD" id="cd01712">
    <property type="entry name" value="PPase_ThiI"/>
    <property type="match status" value="1"/>
</dbReference>
<dbReference type="CDD" id="cd11716">
    <property type="entry name" value="THUMP_ThiI"/>
    <property type="match status" value="1"/>
</dbReference>
<dbReference type="FunFam" id="3.40.50.620:FF:000053">
    <property type="entry name" value="Probable tRNA sulfurtransferase"/>
    <property type="match status" value="1"/>
</dbReference>
<dbReference type="Gene3D" id="3.30.2130.30">
    <property type="match status" value="1"/>
</dbReference>
<dbReference type="Gene3D" id="3.40.50.620">
    <property type="entry name" value="HUPs"/>
    <property type="match status" value="1"/>
</dbReference>
<dbReference type="HAMAP" id="MF_00021">
    <property type="entry name" value="ThiI"/>
    <property type="match status" value="1"/>
</dbReference>
<dbReference type="InterPro" id="IPR014729">
    <property type="entry name" value="Rossmann-like_a/b/a_fold"/>
</dbReference>
<dbReference type="InterPro" id="IPR020536">
    <property type="entry name" value="ThiI_AANH"/>
</dbReference>
<dbReference type="InterPro" id="IPR054173">
    <property type="entry name" value="ThiI_fer"/>
</dbReference>
<dbReference type="InterPro" id="IPR049961">
    <property type="entry name" value="ThiI_N"/>
</dbReference>
<dbReference type="InterPro" id="IPR004114">
    <property type="entry name" value="THUMP_dom"/>
</dbReference>
<dbReference type="InterPro" id="IPR049962">
    <property type="entry name" value="THUMP_ThiI"/>
</dbReference>
<dbReference type="InterPro" id="IPR003720">
    <property type="entry name" value="tRNA_STrfase"/>
</dbReference>
<dbReference type="InterPro" id="IPR050102">
    <property type="entry name" value="tRNA_sulfurtransferase_ThiI"/>
</dbReference>
<dbReference type="NCBIfam" id="TIGR00342">
    <property type="entry name" value="tRNA uracil 4-sulfurtransferase ThiI"/>
    <property type="match status" value="1"/>
</dbReference>
<dbReference type="PANTHER" id="PTHR43209">
    <property type="entry name" value="TRNA SULFURTRANSFERASE"/>
    <property type="match status" value="1"/>
</dbReference>
<dbReference type="PANTHER" id="PTHR43209:SF1">
    <property type="entry name" value="TRNA SULFURTRANSFERASE"/>
    <property type="match status" value="1"/>
</dbReference>
<dbReference type="Pfam" id="PF02568">
    <property type="entry name" value="ThiI"/>
    <property type="match status" value="1"/>
</dbReference>
<dbReference type="Pfam" id="PF22025">
    <property type="entry name" value="ThiI_fer"/>
    <property type="match status" value="1"/>
</dbReference>
<dbReference type="Pfam" id="PF02926">
    <property type="entry name" value="THUMP"/>
    <property type="match status" value="1"/>
</dbReference>
<dbReference type="SMART" id="SM00981">
    <property type="entry name" value="THUMP"/>
    <property type="match status" value="1"/>
</dbReference>
<dbReference type="SUPFAM" id="SSF52402">
    <property type="entry name" value="Adenine nucleotide alpha hydrolases-like"/>
    <property type="match status" value="1"/>
</dbReference>
<dbReference type="SUPFAM" id="SSF143437">
    <property type="entry name" value="THUMP domain-like"/>
    <property type="match status" value="1"/>
</dbReference>
<dbReference type="PROSITE" id="PS51165">
    <property type="entry name" value="THUMP"/>
    <property type="match status" value="1"/>
</dbReference>
<protein>
    <recommendedName>
        <fullName evidence="1">Probable tRNA sulfurtransferase</fullName>
        <ecNumber evidence="1">2.8.1.4</ecNumber>
    </recommendedName>
    <alternativeName>
        <fullName evidence="1">Sulfur carrier protein ThiS sulfurtransferase</fullName>
    </alternativeName>
    <alternativeName>
        <fullName evidence="1">Thiamine biosynthesis protein ThiI</fullName>
    </alternativeName>
    <alternativeName>
        <fullName evidence="1">tRNA 4-thiouridine synthase</fullName>
    </alternativeName>
</protein>
<accession>P0DF95</accession>
<accession>Q878I5</accession>
<accession>Q8K7Z0</accession>